<proteinExistence type="inferred from homology"/>
<evidence type="ECO:0000255" key="1"/>
<evidence type="ECO:0000305" key="2"/>
<protein>
    <recommendedName>
        <fullName>Uncharacterized protein MT1309</fullName>
    </recommendedName>
</protein>
<accession>P9WM42</accession>
<accession>L0T6D4</accession>
<accession>P64793</accession>
<accession>Q11048</accession>
<gene>
    <name type="ordered locus">MT1309</name>
</gene>
<feature type="signal peptide" evidence="1">
    <location>
        <begin position="1"/>
        <end position="19"/>
    </location>
</feature>
<feature type="chain" id="PRO_0000427369" description="Uncharacterized protein MT1309">
    <location>
        <begin position="20"/>
        <end position="113"/>
    </location>
</feature>
<keyword id="KW-1185">Reference proteome</keyword>
<keyword id="KW-0732">Signal</keyword>
<comment type="similarity">
    <text evidence="2">To M.tuberculosis Rv1291c.</text>
</comment>
<comment type="sequence caution" evidence="2">
    <conflict type="erroneous initiation">
        <sequence resource="EMBL-CDS" id="AAK45569"/>
    </conflict>
</comment>
<organism>
    <name type="scientific">Mycobacterium tuberculosis (strain CDC 1551 / Oshkosh)</name>
    <dbReference type="NCBI Taxonomy" id="83331"/>
    <lineage>
        <taxon>Bacteria</taxon>
        <taxon>Bacillati</taxon>
        <taxon>Actinomycetota</taxon>
        <taxon>Actinomycetes</taxon>
        <taxon>Mycobacteriales</taxon>
        <taxon>Mycobacteriaceae</taxon>
        <taxon>Mycobacterium</taxon>
        <taxon>Mycobacterium tuberculosis complex</taxon>
    </lineage>
</organism>
<reference key="1">
    <citation type="journal article" date="2002" name="J. Bacteriol.">
        <title>Whole-genome comparison of Mycobacterium tuberculosis clinical and laboratory strains.</title>
        <authorList>
            <person name="Fleischmann R.D."/>
            <person name="Alland D."/>
            <person name="Eisen J.A."/>
            <person name="Carpenter L."/>
            <person name="White O."/>
            <person name="Peterson J.D."/>
            <person name="DeBoy R.T."/>
            <person name="Dodson R.J."/>
            <person name="Gwinn M.L."/>
            <person name="Haft D.H."/>
            <person name="Hickey E.K."/>
            <person name="Kolonay J.F."/>
            <person name="Nelson W.C."/>
            <person name="Umayam L.A."/>
            <person name="Ermolaeva M.D."/>
            <person name="Salzberg S.L."/>
            <person name="Delcher A."/>
            <person name="Utterback T.R."/>
            <person name="Weidman J.F."/>
            <person name="Khouri H.M."/>
            <person name="Gill J."/>
            <person name="Mikula A."/>
            <person name="Bishai W."/>
            <person name="Jacobs W.R. Jr."/>
            <person name="Venter J.C."/>
            <person name="Fraser C.M."/>
        </authorList>
    </citation>
    <scope>NUCLEOTIDE SEQUENCE [LARGE SCALE GENOMIC DNA]</scope>
    <source>
        <strain>CDC 1551 / Oshkosh</strain>
    </source>
</reference>
<dbReference type="EMBL" id="AE000516">
    <property type="protein sequence ID" value="AAK45569.1"/>
    <property type="status" value="ALT_INIT"/>
    <property type="molecule type" value="Genomic_DNA"/>
</dbReference>
<dbReference type="PIR" id="G70754">
    <property type="entry name" value="G70754"/>
</dbReference>
<dbReference type="RefSeq" id="WP_003406566.1">
    <property type="nucleotide sequence ID" value="NZ_KK341227.1"/>
</dbReference>
<dbReference type="SMR" id="P9WM42"/>
<dbReference type="KEGG" id="mtc:MT1309"/>
<dbReference type="PATRIC" id="fig|83331.31.peg.1414"/>
<dbReference type="HOGENOM" id="CLU_135573_4_0_11"/>
<dbReference type="Proteomes" id="UP000001020">
    <property type="component" value="Chromosome"/>
</dbReference>
<dbReference type="InterPro" id="IPR007969">
    <property type="entry name" value="DUF732"/>
</dbReference>
<dbReference type="Pfam" id="PF05305">
    <property type="entry name" value="DUF732"/>
    <property type="match status" value="1"/>
</dbReference>
<name>Y1271_MYCTO</name>
<sequence length="113" mass="11589">MLSPLSPRIIAAFTTAVGAAAIGLAVATAGTAGANTKDEAFIAQMESIGVTFSSPQVATQQAQLVCKKLASGETGTEIAEEVLSQTNLTTKQAAYFVVDATKAYCPQYASQLT</sequence>